<feature type="chain" id="PRO_0000220946" description="Putative inorganic phosphate cotransporter">
    <location>
        <begin position="1"/>
        <end position="529"/>
    </location>
</feature>
<feature type="transmembrane region" description="Helical" evidence="1">
    <location>
        <begin position="37"/>
        <end position="57"/>
    </location>
</feature>
<feature type="transmembrane region" description="Helical" evidence="1">
    <location>
        <begin position="110"/>
        <end position="130"/>
    </location>
</feature>
<feature type="transmembrane region" description="Helical" evidence="1">
    <location>
        <begin position="148"/>
        <end position="168"/>
    </location>
</feature>
<feature type="transmembrane region" description="Helical" evidence="1">
    <location>
        <begin position="202"/>
        <end position="222"/>
    </location>
</feature>
<feature type="transmembrane region" description="Helical" evidence="1">
    <location>
        <begin position="232"/>
        <end position="252"/>
    </location>
</feature>
<feature type="transmembrane region" description="Helical" evidence="1">
    <location>
        <begin position="338"/>
        <end position="358"/>
    </location>
</feature>
<feature type="transmembrane region" description="Helical" evidence="1">
    <location>
        <begin position="429"/>
        <end position="449"/>
    </location>
</feature>
<feature type="transmembrane region" description="Helical" evidence="1">
    <location>
        <begin position="466"/>
        <end position="486"/>
    </location>
</feature>
<feature type="region of interest" description="Disordered" evidence="2">
    <location>
        <begin position="495"/>
        <end position="529"/>
    </location>
</feature>
<feature type="compositionally biased region" description="Polar residues" evidence="2">
    <location>
        <begin position="504"/>
        <end position="529"/>
    </location>
</feature>
<feature type="splice variant" id="VSP_007009" description="In isoform A." evidence="3">
    <original>MPFRRSSLNHRHRDGHVLVWNQRNLHESLEQQPQR</original>
    <variation>MSASKEAICGSTEKDLEKPALG</variation>
    <location>
        <begin position="1"/>
        <end position="35"/>
    </location>
</feature>
<comment type="function">
    <text>May be an inorganic phosphate cotransporter.</text>
</comment>
<comment type="subcellular location">
    <subcellularLocation>
        <location evidence="3">Membrane</location>
        <topology evidence="3">Multi-pass membrane protein</topology>
    </subcellularLocation>
</comment>
<comment type="alternative products">
    <event type="alternative splicing"/>
    <isoform>
        <id>Q9V7S5-1</id>
        <name>B</name>
        <sequence type="displayed"/>
    </isoform>
    <isoform>
        <id>Q9V7S5-2</id>
        <name>A</name>
        <sequence type="described" ref="VSP_007009"/>
    </isoform>
</comment>
<comment type="similarity">
    <text evidence="3">Belongs to the major facilitator superfamily. Sodium/anion cotransporter family.</text>
</comment>
<proteinExistence type="evidence at transcript level"/>
<reference key="1">
    <citation type="journal article" date="2000" name="Science">
        <title>The genome sequence of Drosophila melanogaster.</title>
        <authorList>
            <person name="Adams M.D."/>
            <person name="Celniker S.E."/>
            <person name="Holt R.A."/>
            <person name="Evans C.A."/>
            <person name="Gocayne J.D."/>
            <person name="Amanatides P.G."/>
            <person name="Scherer S.E."/>
            <person name="Li P.W."/>
            <person name="Hoskins R.A."/>
            <person name="Galle R.F."/>
            <person name="George R.A."/>
            <person name="Lewis S.E."/>
            <person name="Richards S."/>
            <person name="Ashburner M."/>
            <person name="Henderson S.N."/>
            <person name="Sutton G.G."/>
            <person name="Wortman J.R."/>
            <person name="Yandell M.D."/>
            <person name="Zhang Q."/>
            <person name="Chen L.X."/>
            <person name="Brandon R.C."/>
            <person name="Rogers Y.-H.C."/>
            <person name="Blazej R.G."/>
            <person name="Champe M."/>
            <person name="Pfeiffer B.D."/>
            <person name="Wan K.H."/>
            <person name="Doyle C."/>
            <person name="Baxter E.G."/>
            <person name="Helt G."/>
            <person name="Nelson C.R."/>
            <person name="Miklos G.L.G."/>
            <person name="Abril J.F."/>
            <person name="Agbayani A."/>
            <person name="An H.-J."/>
            <person name="Andrews-Pfannkoch C."/>
            <person name="Baldwin D."/>
            <person name="Ballew R.M."/>
            <person name="Basu A."/>
            <person name="Baxendale J."/>
            <person name="Bayraktaroglu L."/>
            <person name="Beasley E.M."/>
            <person name="Beeson K.Y."/>
            <person name="Benos P.V."/>
            <person name="Berman B.P."/>
            <person name="Bhandari D."/>
            <person name="Bolshakov S."/>
            <person name="Borkova D."/>
            <person name="Botchan M.R."/>
            <person name="Bouck J."/>
            <person name="Brokstein P."/>
            <person name="Brottier P."/>
            <person name="Burtis K.C."/>
            <person name="Busam D.A."/>
            <person name="Butler H."/>
            <person name="Cadieu E."/>
            <person name="Center A."/>
            <person name="Chandra I."/>
            <person name="Cherry J.M."/>
            <person name="Cawley S."/>
            <person name="Dahlke C."/>
            <person name="Davenport L.B."/>
            <person name="Davies P."/>
            <person name="de Pablos B."/>
            <person name="Delcher A."/>
            <person name="Deng Z."/>
            <person name="Mays A.D."/>
            <person name="Dew I."/>
            <person name="Dietz S.M."/>
            <person name="Dodson K."/>
            <person name="Doup L.E."/>
            <person name="Downes M."/>
            <person name="Dugan-Rocha S."/>
            <person name="Dunkov B.C."/>
            <person name="Dunn P."/>
            <person name="Durbin K.J."/>
            <person name="Evangelista C.C."/>
            <person name="Ferraz C."/>
            <person name="Ferriera S."/>
            <person name="Fleischmann W."/>
            <person name="Fosler C."/>
            <person name="Gabrielian A.E."/>
            <person name="Garg N.S."/>
            <person name="Gelbart W.M."/>
            <person name="Glasser K."/>
            <person name="Glodek A."/>
            <person name="Gong F."/>
            <person name="Gorrell J.H."/>
            <person name="Gu Z."/>
            <person name="Guan P."/>
            <person name="Harris M."/>
            <person name="Harris N.L."/>
            <person name="Harvey D.A."/>
            <person name="Heiman T.J."/>
            <person name="Hernandez J.R."/>
            <person name="Houck J."/>
            <person name="Hostin D."/>
            <person name="Houston K.A."/>
            <person name="Howland T.J."/>
            <person name="Wei M.-H."/>
            <person name="Ibegwam C."/>
            <person name="Jalali M."/>
            <person name="Kalush F."/>
            <person name="Karpen G.H."/>
            <person name="Ke Z."/>
            <person name="Kennison J.A."/>
            <person name="Ketchum K.A."/>
            <person name="Kimmel B.E."/>
            <person name="Kodira C.D."/>
            <person name="Kraft C.L."/>
            <person name="Kravitz S."/>
            <person name="Kulp D."/>
            <person name="Lai Z."/>
            <person name="Lasko P."/>
            <person name="Lei Y."/>
            <person name="Levitsky A.A."/>
            <person name="Li J.H."/>
            <person name="Li Z."/>
            <person name="Liang Y."/>
            <person name="Lin X."/>
            <person name="Liu X."/>
            <person name="Mattei B."/>
            <person name="McIntosh T.C."/>
            <person name="McLeod M.P."/>
            <person name="McPherson D."/>
            <person name="Merkulov G."/>
            <person name="Milshina N.V."/>
            <person name="Mobarry C."/>
            <person name="Morris J."/>
            <person name="Moshrefi A."/>
            <person name="Mount S.M."/>
            <person name="Moy M."/>
            <person name="Murphy B."/>
            <person name="Murphy L."/>
            <person name="Muzny D.M."/>
            <person name="Nelson D.L."/>
            <person name="Nelson D.R."/>
            <person name="Nelson K.A."/>
            <person name="Nixon K."/>
            <person name="Nusskern D.R."/>
            <person name="Pacleb J.M."/>
            <person name="Palazzolo M."/>
            <person name="Pittman G.S."/>
            <person name="Pan S."/>
            <person name="Pollard J."/>
            <person name="Puri V."/>
            <person name="Reese M.G."/>
            <person name="Reinert K."/>
            <person name="Remington K."/>
            <person name="Saunders R.D.C."/>
            <person name="Scheeler F."/>
            <person name="Shen H."/>
            <person name="Shue B.C."/>
            <person name="Siden-Kiamos I."/>
            <person name="Simpson M."/>
            <person name="Skupski M.P."/>
            <person name="Smith T.J."/>
            <person name="Spier E."/>
            <person name="Spradling A.C."/>
            <person name="Stapleton M."/>
            <person name="Strong R."/>
            <person name="Sun E."/>
            <person name="Svirskas R."/>
            <person name="Tector C."/>
            <person name="Turner R."/>
            <person name="Venter E."/>
            <person name="Wang A.H."/>
            <person name="Wang X."/>
            <person name="Wang Z.-Y."/>
            <person name="Wassarman D.A."/>
            <person name="Weinstock G.M."/>
            <person name="Weissenbach J."/>
            <person name="Williams S.M."/>
            <person name="Woodage T."/>
            <person name="Worley K.C."/>
            <person name="Wu D."/>
            <person name="Yang S."/>
            <person name="Yao Q.A."/>
            <person name="Ye J."/>
            <person name="Yeh R.-F."/>
            <person name="Zaveri J.S."/>
            <person name="Zhan M."/>
            <person name="Zhang G."/>
            <person name="Zhao Q."/>
            <person name="Zheng L."/>
            <person name="Zheng X.H."/>
            <person name="Zhong F.N."/>
            <person name="Zhong W."/>
            <person name="Zhou X."/>
            <person name="Zhu S.C."/>
            <person name="Zhu X."/>
            <person name="Smith H.O."/>
            <person name="Gibbs R.A."/>
            <person name="Myers E.W."/>
            <person name="Rubin G.M."/>
            <person name="Venter J.C."/>
        </authorList>
    </citation>
    <scope>NUCLEOTIDE SEQUENCE [LARGE SCALE GENOMIC DNA]</scope>
    <source>
        <strain>Berkeley</strain>
    </source>
</reference>
<reference key="2">
    <citation type="journal article" date="2002" name="Genome Biol.">
        <title>Annotation of the Drosophila melanogaster euchromatic genome: a systematic review.</title>
        <authorList>
            <person name="Misra S."/>
            <person name="Crosby M.A."/>
            <person name="Mungall C.J."/>
            <person name="Matthews B.B."/>
            <person name="Campbell K.S."/>
            <person name="Hradecky P."/>
            <person name="Huang Y."/>
            <person name="Kaminker J.S."/>
            <person name="Millburn G.H."/>
            <person name="Prochnik S.E."/>
            <person name="Smith C.D."/>
            <person name="Tupy J.L."/>
            <person name="Whitfield E.J."/>
            <person name="Bayraktaroglu L."/>
            <person name="Berman B.P."/>
            <person name="Bettencourt B.R."/>
            <person name="Celniker S.E."/>
            <person name="de Grey A.D.N.J."/>
            <person name="Drysdale R.A."/>
            <person name="Harris N.L."/>
            <person name="Richter J."/>
            <person name="Russo S."/>
            <person name="Schroeder A.J."/>
            <person name="Shu S.Q."/>
            <person name="Stapleton M."/>
            <person name="Yamada C."/>
            <person name="Ashburner M."/>
            <person name="Gelbart W.M."/>
            <person name="Rubin G.M."/>
            <person name="Lewis S.E."/>
        </authorList>
    </citation>
    <scope>GENOME REANNOTATION</scope>
    <scope>ALTERNATIVE SPLICING</scope>
    <source>
        <strain>Berkeley</strain>
    </source>
</reference>
<reference key="3">
    <citation type="journal article" date="2002" name="Genome Biol.">
        <title>A Drosophila full-length cDNA resource.</title>
        <authorList>
            <person name="Stapleton M."/>
            <person name="Carlson J.W."/>
            <person name="Brokstein P."/>
            <person name="Yu C."/>
            <person name="Champe M."/>
            <person name="George R.A."/>
            <person name="Guarin H."/>
            <person name="Kronmiller B."/>
            <person name="Pacleb J.M."/>
            <person name="Park S."/>
            <person name="Wan K.H."/>
            <person name="Rubin G.M."/>
            <person name="Celniker S.E."/>
        </authorList>
    </citation>
    <scope>NUCLEOTIDE SEQUENCE [LARGE SCALE MRNA] (ISOFORM B)</scope>
    <source>
        <strain>Berkeley</strain>
        <tissue>Embryo</tissue>
    </source>
</reference>
<reference key="4">
    <citation type="submission" date="1997-09" db="EMBL/GenBank/DDBJ databases">
        <authorList>
            <person name="Da Lage J.-L."/>
        </authorList>
    </citation>
    <scope>NUCLEOTIDE SEQUENCE OF 449-529</scope>
    <source>
        <strain>Canton-S</strain>
    </source>
</reference>
<keyword id="KW-0025">Alternative splicing</keyword>
<keyword id="KW-0406">Ion transport</keyword>
<keyword id="KW-0472">Membrane</keyword>
<keyword id="KW-1185">Reference proteome</keyword>
<keyword id="KW-0915">Sodium</keyword>
<keyword id="KW-0739">Sodium transport</keyword>
<keyword id="KW-0769">Symport</keyword>
<keyword id="KW-0812">Transmembrane</keyword>
<keyword id="KW-1133">Transmembrane helix</keyword>
<keyword id="KW-0813">Transport</keyword>
<protein>
    <recommendedName>
        <fullName>Putative inorganic phosphate cotransporter</fullName>
    </recommendedName>
</protein>
<gene>
    <name type="primary">Picot</name>
    <name type="ORF">CG8098</name>
</gene>
<name>PICO_DROME</name>
<dbReference type="EMBL" id="AE013599">
    <property type="protein sequence ID" value="AAF57968.1"/>
    <property type="molecule type" value="Genomic_DNA"/>
</dbReference>
<dbReference type="EMBL" id="AE013599">
    <property type="protein sequence ID" value="AAF57969.1"/>
    <property type="molecule type" value="Genomic_DNA"/>
</dbReference>
<dbReference type="EMBL" id="AY069501">
    <property type="protein sequence ID" value="AAL39646.1"/>
    <property type="molecule type" value="mRNA"/>
</dbReference>
<dbReference type="EMBL" id="AF022713">
    <property type="protein sequence ID" value="AAD09148.1"/>
    <property type="molecule type" value="Genomic_DNA"/>
</dbReference>
<dbReference type="RefSeq" id="NP_001286496.1">
    <molecule id="Q9V7S5-2"/>
    <property type="nucleotide sequence ID" value="NM_001299567.1"/>
</dbReference>
<dbReference type="RefSeq" id="NP_001286497.1">
    <molecule id="Q9V7S5-2"/>
    <property type="nucleotide sequence ID" value="NM_001299568.1"/>
</dbReference>
<dbReference type="RefSeq" id="NP_611146.1">
    <molecule id="Q9V7S5-2"/>
    <property type="nucleotide sequence ID" value="NM_137302.3"/>
</dbReference>
<dbReference type="RefSeq" id="NP_725600.1">
    <molecule id="Q9V7S5-1"/>
    <property type="nucleotide sequence ID" value="NM_166187.2"/>
</dbReference>
<dbReference type="SMR" id="Q9V7S5"/>
<dbReference type="BioGRID" id="62577">
    <property type="interactions" value="6"/>
</dbReference>
<dbReference type="DIP" id="DIP-22400N"/>
<dbReference type="FunCoup" id="Q9V7S5">
    <property type="interactions" value="185"/>
</dbReference>
<dbReference type="IntAct" id="Q9V7S5">
    <property type="interactions" value="3"/>
</dbReference>
<dbReference type="STRING" id="7227.FBpp0086261"/>
<dbReference type="TCDB" id="2.A.1.14.34">
    <property type="family name" value="the major facilitator superfamily (mfs)"/>
</dbReference>
<dbReference type="SwissPalm" id="Q9V7S5"/>
<dbReference type="PaxDb" id="7227-FBpp0086261"/>
<dbReference type="DNASU" id="36865"/>
<dbReference type="EnsemblMetazoa" id="FBtr0087114">
    <molecule id="Q9V7S5-2"/>
    <property type="protein sequence ID" value="FBpp0086260"/>
    <property type="gene ID" value="FBgn0024315"/>
</dbReference>
<dbReference type="EnsemblMetazoa" id="FBtr0087115">
    <molecule id="Q9V7S5-1"/>
    <property type="protein sequence ID" value="FBpp0086261"/>
    <property type="gene ID" value="FBgn0024315"/>
</dbReference>
<dbReference type="EnsemblMetazoa" id="FBtr0340067">
    <molecule id="Q9V7S5-2"/>
    <property type="protein sequence ID" value="FBpp0309073"/>
    <property type="gene ID" value="FBgn0024315"/>
</dbReference>
<dbReference type="EnsemblMetazoa" id="FBtr0340068">
    <molecule id="Q9V7S5-2"/>
    <property type="protein sequence ID" value="FBpp0309074"/>
    <property type="gene ID" value="FBgn0024315"/>
</dbReference>
<dbReference type="GeneID" id="36865"/>
<dbReference type="KEGG" id="dme:Dmel_CG8098"/>
<dbReference type="UCSC" id="CG8098-RA">
    <molecule id="Q9V7S5-1"/>
    <property type="organism name" value="d. melanogaster"/>
</dbReference>
<dbReference type="AGR" id="FB:FBgn0024315"/>
<dbReference type="CTD" id="36865"/>
<dbReference type="FlyBase" id="FBgn0024315">
    <property type="gene designation" value="Picot"/>
</dbReference>
<dbReference type="VEuPathDB" id="VectorBase:FBgn0024315"/>
<dbReference type="eggNOG" id="KOG2532">
    <property type="taxonomic scope" value="Eukaryota"/>
</dbReference>
<dbReference type="GeneTree" id="ENSGT00940000173740"/>
<dbReference type="InParanoid" id="Q9V7S5"/>
<dbReference type="OMA" id="WEQPGLE"/>
<dbReference type="OrthoDB" id="2985014at2759"/>
<dbReference type="PhylomeDB" id="Q9V7S5"/>
<dbReference type="Reactome" id="R-DME-2672351">
    <property type="pathway name" value="Stimuli-sensing channels"/>
</dbReference>
<dbReference type="Reactome" id="R-DME-428643">
    <property type="pathway name" value="Organic anion transporters"/>
</dbReference>
<dbReference type="BioGRID-ORCS" id="36865">
    <property type="hits" value="0 hits in 1 CRISPR screen"/>
</dbReference>
<dbReference type="GenomeRNAi" id="36865"/>
<dbReference type="PRO" id="PR:Q9V7S5"/>
<dbReference type="Proteomes" id="UP000000803">
    <property type="component" value="Chromosome 2R"/>
</dbReference>
<dbReference type="Bgee" id="FBgn0024315">
    <property type="expression patterns" value="Expressed in adult Malpighian tubule principal cell of lower segment in Malpighian tubule and 166 other cell types or tissues"/>
</dbReference>
<dbReference type="ExpressionAtlas" id="Q9V7S5">
    <property type="expression patterns" value="baseline and differential"/>
</dbReference>
<dbReference type="GO" id="GO:0016020">
    <property type="term" value="C:membrane"/>
    <property type="evidence" value="ECO:0000318"/>
    <property type="project" value="GO_Central"/>
</dbReference>
<dbReference type="GO" id="GO:0005315">
    <property type="term" value="F:phosphate transmembrane transporter activity"/>
    <property type="evidence" value="ECO:0007669"/>
    <property type="project" value="InterPro"/>
</dbReference>
<dbReference type="GO" id="GO:0015293">
    <property type="term" value="F:symporter activity"/>
    <property type="evidence" value="ECO:0007669"/>
    <property type="project" value="UniProtKB-KW"/>
</dbReference>
<dbReference type="GO" id="GO:0022857">
    <property type="term" value="F:transmembrane transporter activity"/>
    <property type="evidence" value="ECO:0000318"/>
    <property type="project" value="GO_Central"/>
</dbReference>
<dbReference type="GO" id="GO:0035435">
    <property type="term" value="P:phosphate ion transmembrane transport"/>
    <property type="evidence" value="ECO:0007669"/>
    <property type="project" value="InterPro"/>
</dbReference>
<dbReference type="GO" id="GO:0006814">
    <property type="term" value="P:sodium ion transport"/>
    <property type="evidence" value="ECO:0007669"/>
    <property type="project" value="UniProtKB-KW"/>
</dbReference>
<dbReference type="CDD" id="cd17318">
    <property type="entry name" value="MFS_SLC17"/>
    <property type="match status" value="1"/>
</dbReference>
<dbReference type="FunFam" id="1.20.1250.20:FF:000144">
    <property type="entry name" value="Picot, isoform B"/>
    <property type="match status" value="1"/>
</dbReference>
<dbReference type="FunFam" id="1.20.1250.20:FF:000003">
    <property type="entry name" value="Solute carrier family 17 member 3"/>
    <property type="match status" value="1"/>
</dbReference>
<dbReference type="Gene3D" id="1.20.1250.20">
    <property type="entry name" value="MFS general substrate transporter like domains"/>
    <property type="match status" value="2"/>
</dbReference>
<dbReference type="InterPro" id="IPR011701">
    <property type="entry name" value="MFS"/>
</dbReference>
<dbReference type="InterPro" id="IPR020846">
    <property type="entry name" value="MFS_dom"/>
</dbReference>
<dbReference type="InterPro" id="IPR050382">
    <property type="entry name" value="MFS_Na/Anion_cotransporter"/>
</dbReference>
<dbReference type="InterPro" id="IPR036259">
    <property type="entry name" value="MFS_trans_sf"/>
</dbReference>
<dbReference type="InterPro" id="IPR004745">
    <property type="entry name" value="Pi_cotranspt"/>
</dbReference>
<dbReference type="NCBIfam" id="TIGR00894">
    <property type="entry name" value="2A0114euk"/>
    <property type="match status" value="1"/>
</dbReference>
<dbReference type="PANTHER" id="PTHR11662:SF247">
    <property type="entry name" value="MAJOR FACILITATOR SUPERFAMILY (MFS) PROFILE DOMAIN-CONTAINING PROTEIN-RELATED"/>
    <property type="match status" value="1"/>
</dbReference>
<dbReference type="PANTHER" id="PTHR11662">
    <property type="entry name" value="SOLUTE CARRIER FAMILY 17"/>
    <property type="match status" value="1"/>
</dbReference>
<dbReference type="Pfam" id="PF07690">
    <property type="entry name" value="MFS_1"/>
    <property type="match status" value="1"/>
</dbReference>
<dbReference type="SUPFAM" id="SSF103473">
    <property type="entry name" value="MFS general substrate transporter"/>
    <property type="match status" value="1"/>
</dbReference>
<dbReference type="PROSITE" id="PS50850">
    <property type="entry name" value="MFS"/>
    <property type="match status" value="1"/>
</dbReference>
<evidence type="ECO:0000255" key="1"/>
<evidence type="ECO:0000256" key="2">
    <source>
        <dbReference type="SAM" id="MobiDB-lite"/>
    </source>
</evidence>
<evidence type="ECO:0000305" key="3"/>
<sequence>MPFRRSSLNHRHRDGHVLVWNQRNLHESLEQQPQRCFATRYFVTFMLFLGMANAYVMRTNMSVAIVAMVNHTAIKSGEAEEYDDECGDRDIPIDDSQDGEFAWSSALQGYILSSFFYGYVITQIPFGILAKKYGSLRFLGYGMLINSVFAFLVPVAARGGGVWGLCAVRFIQGLGEGPIVPCTHAMLAKWIPPNERSRMGAAVYAGAQFGTIISMPLSGLLAEYGFDGGWPSIFYVFGIVGTVWSIAFLIFVHEDPSSHPTIDEREKKYINDSLWGTDVVKSPPIPFKAIIKSLPFYAILFAHMGHNYGYETLMTELPTYMKQVLRFSLKSNGLLSSLPYLAMWLFSMFISVVADWMISSKRFSHTATRKLINSIGQYGPGVALIAASYTGCDRALTLAILTIGVGLNGGIYSGFKINHLDLTPRFAGFLMSITNCSANLAGLLAPIAAGHLISDPSKPMMGQWQIVFFIAAFVYIICGTFYNIFGSGERQYWDNPEDDEQKPALQTTVTTSPARLSNGSTAPAAISSS</sequence>
<organism>
    <name type="scientific">Drosophila melanogaster</name>
    <name type="common">Fruit fly</name>
    <dbReference type="NCBI Taxonomy" id="7227"/>
    <lineage>
        <taxon>Eukaryota</taxon>
        <taxon>Metazoa</taxon>
        <taxon>Ecdysozoa</taxon>
        <taxon>Arthropoda</taxon>
        <taxon>Hexapoda</taxon>
        <taxon>Insecta</taxon>
        <taxon>Pterygota</taxon>
        <taxon>Neoptera</taxon>
        <taxon>Endopterygota</taxon>
        <taxon>Diptera</taxon>
        <taxon>Brachycera</taxon>
        <taxon>Muscomorpha</taxon>
        <taxon>Ephydroidea</taxon>
        <taxon>Drosophilidae</taxon>
        <taxon>Drosophila</taxon>
        <taxon>Sophophora</taxon>
    </lineage>
</organism>
<accession>Q9V7S5</accession>
<accession>O61364</accession>
<accession>Q8T077</accession>
<accession>Q9V7S6</accession>